<accession>B5YKE9</accession>
<gene>
    <name evidence="1" type="primary">ruvB</name>
    <name type="ordered locus">THEYE_A0876</name>
</gene>
<sequence>MENNELLDITLRPKSLKEFIGQKKIKDNIEVFIKAALIRQEPLDHVLFCGPPGLGKTTLATVIANELGVNIKSTSGPVLERAGDVAAILTNLSDRDILFIDEIHRLPRMVEEILYPAMEDFTLDIIVGQGPSARSIKINLPRFTLIGATTRTGLITSPLRDRFGVVFRLEFYNSEELKEIVKRSARILGILIEENAATEIARRSRGTPRVANRLLKRIRDFAQVKDKDIIDLQIAQEALIAMDVDDYGLDDMDRKILLTIIEKFNGGPAGIESIAASLREDKDTIEDVYEPYLMQEGFIERTARGRVATRFAYEVLKRKIPERLF</sequence>
<evidence type="ECO:0000255" key="1">
    <source>
        <dbReference type="HAMAP-Rule" id="MF_00016"/>
    </source>
</evidence>
<reference key="1">
    <citation type="submission" date="2008-08" db="EMBL/GenBank/DDBJ databases">
        <title>The complete genome sequence of Thermodesulfovibrio yellowstonii strain ATCC 51303 / DSM 11347 / YP87.</title>
        <authorList>
            <person name="Dodson R.J."/>
            <person name="Durkin A.S."/>
            <person name="Wu M."/>
            <person name="Eisen J."/>
            <person name="Sutton G."/>
        </authorList>
    </citation>
    <scope>NUCLEOTIDE SEQUENCE [LARGE SCALE GENOMIC DNA]</scope>
    <source>
        <strain>ATCC 51303 / DSM 11347 / YP87</strain>
    </source>
</reference>
<dbReference type="EC" id="3.6.4.-" evidence="1"/>
<dbReference type="EMBL" id="CP001147">
    <property type="protein sequence ID" value="ACI21398.1"/>
    <property type="molecule type" value="Genomic_DNA"/>
</dbReference>
<dbReference type="RefSeq" id="WP_012546115.1">
    <property type="nucleotide sequence ID" value="NC_011296.1"/>
</dbReference>
<dbReference type="RefSeq" id="YP_002248714.1">
    <property type="nucleotide sequence ID" value="NC_011296.1"/>
</dbReference>
<dbReference type="SMR" id="B5YKE9"/>
<dbReference type="FunCoup" id="B5YKE9">
    <property type="interactions" value="222"/>
</dbReference>
<dbReference type="STRING" id="289376.THEYE_A0876"/>
<dbReference type="EnsemblBacteria" id="ACI21398">
    <property type="protein sequence ID" value="ACI21398"/>
    <property type="gene ID" value="THEYE_A0876"/>
</dbReference>
<dbReference type="KEGG" id="tye:THEYE_A0876"/>
<dbReference type="PATRIC" id="fig|289376.4.peg.863"/>
<dbReference type="eggNOG" id="COG2255">
    <property type="taxonomic scope" value="Bacteria"/>
</dbReference>
<dbReference type="HOGENOM" id="CLU_055599_1_0_0"/>
<dbReference type="InParanoid" id="B5YKE9"/>
<dbReference type="OrthoDB" id="9804478at2"/>
<dbReference type="Proteomes" id="UP000000718">
    <property type="component" value="Chromosome"/>
</dbReference>
<dbReference type="GO" id="GO:0005737">
    <property type="term" value="C:cytoplasm"/>
    <property type="evidence" value="ECO:0007669"/>
    <property type="project" value="UniProtKB-SubCell"/>
</dbReference>
<dbReference type="GO" id="GO:0048476">
    <property type="term" value="C:Holliday junction resolvase complex"/>
    <property type="evidence" value="ECO:0007669"/>
    <property type="project" value="UniProtKB-UniRule"/>
</dbReference>
<dbReference type="GO" id="GO:0005524">
    <property type="term" value="F:ATP binding"/>
    <property type="evidence" value="ECO:0007669"/>
    <property type="project" value="UniProtKB-UniRule"/>
</dbReference>
<dbReference type="GO" id="GO:0016887">
    <property type="term" value="F:ATP hydrolysis activity"/>
    <property type="evidence" value="ECO:0007669"/>
    <property type="project" value="InterPro"/>
</dbReference>
<dbReference type="GO" id="GO:0000400">
    <property type="term" value="F:four-way junction DNA binding"/>
    <property type="evidence" value="ECO:0007669"/>
    <property type="project" value="UniProtKB-UniRule"/>
</dbReference>
<dbReference type="GO" id="GO:0009378">
    <property type="term" value="F:four-way junction helicase activity"/>
    <property type="evidence" value="ECO:0007669"/>
    <property type="project" value="InterPro"/>
</dbReference>
<dbReference type="GO" id="GO:0006310">
    <property type="term" value="P:DNA recombination"/>
    <property type="evidence" value="ECO:0007669"/>
    <property type="project" value="UniProtKB-UniRule"/>
</dbReference>
<dbReference type="GO" id="GO:0006281">
    <property type="term" value="P:DNA repair"/>
    <property type="evidence" value="ECO:0007669"/>
    <property type="project" value="UniProtKB-UniRule"/>
</dbReference>
<dbReference type="CDD" id="cd00009">
    <property type="entry name" value="AAA"/>
    <property type="match status" value="1"/>
</dbReference>
<dbReference type="Gene3D" id="1.10.8.60">
    <property type="match status" value="1"/>
</dbReference>
<dbReference type="Gene3D" id="3.40.50.300">
    <property type="entry name" value="P-loop containing nucleotide triphosphate hydrolases"/>
    <property type="match status" value="1"/>
</dbReference>
<dbReference type="Gene3D" id="1.10.10.10">
    <property type="entry name" value="Winged helix-like DNA-binding domain superfamily/Winged helix DNA-binding domain"/>
    <property type="match status" value="1"/>
</dbReference>
<dbReference type="HAMAP" id="MF_00016">
    <property type="entry name" value="DNA_HJ_migration_RuvB"/>
    <property type="match status" value="1"/>
</dbReference>
<dbReference type="InterPro" id="IPR003593">
    <property type="entry name" value="AAA+_ATPase"/>
</dbReference>
<dbReference type="InterPro" id="IPR041445">
    <property type="entry name" value="AAA_lid_4"/>
</dbReference>
<dbReference type="InterPro" id="IPR004605">
    <property type="entry name" value="DNA_helicase_Holl-junc_RuvB"/>
</dbReference>
<dbReference type="InterPro" id="IPR027417">
    <property type="entry name" value="P-loop_NTPase"/>
</dbReference>
<dbReference type="InterPro" id="IPR008824">
    <property type="entry name" value="RuvB-like_N"/>
</dbReference>
<dbReference type="InterPro" id="IPR008823">
    <property type="entry name" value="RuvB_C"/>
</dbReference>
<dbReference type="InterPro" id="IPR036388">
    <property type="entry name" value="WH-like_DNA-bd_sf"/>
</dbReference>
<dbReference type="InterPro" id="IPR036390">
    <property type="entry name" value="WH_DNA-bd_sf"/>
</dbReference>
<dbReference type="NCBIfam" id="NF000868">
    <property type="entry name" value="PRK00080.1"/>
    <property type="match status" value="1"/>
</dbReference>
<dbReference type="NCBIfam" id="TIGR00635">
    <property type="entry name" value="ruvB"/>
    <property type="match status" value="1"/>
</dbReference>
<dbReference type="PANTHER" id="PTHR42848">
    <property type="match status" value="1"/>
</dbReference>
<dbReference type="PANTHER" id="PTHR42848:SF1">
    <property type="entry name" value="HOLLIDAY JUNCTION BRANCH MIGRATION COMPLEX SUBUNIT RUVB"/>
    <property type="match status" value="1"/>
</dbReference>
<dbReference type="Pfam" id="PF17864">
    <property type="entry name" value="AAA_lid_4"/>
    <property type="match status" value="1"/>
</dbReference>
<dbReference type="Pfam" id="PF05491">
    <property type="entry name" value="RuvB_C"/>
    <property type="match status" value="1"/>
</dbReference>
<dbReference type="Pfam" id="PF05496">
    <property type="entry name" value="RuvB_N"/>
    <property type="match status" value="1"/>
</dbReference>
<dbReference type="SMART" id="SM00382">
    <property type="entry name" value="AAA"/>
    <property type="match status" value="1"/>
</dbReference>
<dbReference type="SUPFAM" id="SSF52540">
    <property type="entry name" value="P-loop containing nucleoside triphosphate hydrolases"/>
    <property type="match status" value="1"/>
</dbReference>
<dbReference type="SUPFAM" id="SSF46785">
    <property type="entry name" value="Winged helix' DNA-binding domain"/>
    <property type="match status" value="1"/>
</dbReference>
<proteinExistence type="inferred from homology"/>
<feature type="chain" id="PRO_1000201849" description="Holliday junction branch migration complex subunit RuvB">
    <location>
        <begin position="1"/>
        <end position="325"/>
    </location>
</feature>
<feature type="region of interest" description="Large ATPase domain (RuvB-L)" evidence="1">
    <location>
        <begin position="1"/>
        <end position="172"/>
    </location>
</feature>
<feature type="region of interest" description="Small ATPAse domain (RuvB-S)" evidence="1">
    <location>
        <begin position="173"/>
        <end position="243"/>
    </location>
</feature>
<feature type="region of interest" description="Head domain (RuvB-H)" evidence="1">
    <location>
        <begin position="246"/>
        <end position="325"/>
    </location>
</feature>
<feature type="binding site" evidence="1">
    <location>
        <position position="11"/>
    </location>
    <ligand>
        <name>ATP</name>
        <dbReference type="ChEBI" id="CHEBI:30616"/>
    </ligand>
</feature>
<feature type="binding site" evidence="1">
    <location>
        <position position="12"/>
    </location>
    <ligand>
        <name>ATP</name>
        <dbReference type="ChEBI" id="CHEBI:30616"/>
    </ligand>
</feature>
<feature type="binding site" evidence="1">
    <location>
        <position position="53"/>
    </location>
    <ligand>
        <name>ATP</name>
        <dbReference type="ChEBI" id="CHEBI:30616"/>
    </ligand>
</feature>
<feature type="binding site" evidence="1">
    <location>
        <position position="56"/>
    </location>
    <ligand>
        <name>ATP</name>
        <dbReference type="ChEBI" id="CHEBI:30616"/>
    </ligand>
</feature>
<feature type="binding site" evidence="1">
    <location>
        <position position="57"/>
    </location>
    <ligand>
        <name>ATP</name>
        <dbReference type="ChEBI" id="CHEBI:30616"/>
    </ligand>
</feature>
<feature type="binding site" evidence="1">
    <location>
        <position position="57"/>
    </location>
    <ligand>
        <name>Mg(2+)</name>
        <dbReference type="ChEBI" id="CHEBI:18420"/>
    </ligand>
</feature>
<feature type="binding site" evidence="1">
    <location>
        <position position="58"/>
    </location>
    <ligand>
        <name>ATP</name>
        <dbReference type="ChEBI" id="CHEBI:30616"/>
    </ligand>
</feature>
<feature type="binding site" evidence="1">
    <location>
        <begin position="119"/>
        <end position="121"/>
    </location>
    <ligand>
        <name>ATP</name>
        <dbReference type="ChEBI" id="CHEBI:30616"/>
    </ligand>
</feature>
<feature type="binding site" evidence="1">
    <location>
        <position position="162"/>
    </location>
    <ligand>
        <name>ATP</name>
        <dbReference type="ChEBI" id="CHEBI:30616"/>
    </ligand>
</feature>
<feature type="binding site" evidence="1">
    <location>
        <position position="172"/>
    </location>
    <ligand>
        <name>ATP</name>
        <dbReference type="ChEBI" id="CHEBI:30616"/>
    </ligand>
</feature>
<feature type="binding site" evidence="1">
    <location>
        <position position="209"/>
    </location>
    <ligand>
        <name>ATP</name>
        <dbReference type="ChEBI" id="CHEBI:30616"/>
    </ligand>
</feature>
<feature type="binding site" evidence="1">
    <location>
        <position position="301"/>
    </location>
    <ligand>
        <name>DNA</name>
        <dbReference type="ChEBI" id="CHEBI:16991"/>
    </ligand>
</feature>
<feature type="binding site" evidence="1">
    <location>
        <position position="306"/>
    </location>
    <ligand>
        <name>DNA</name>
        <dbReference type="ChEBI" id="CHEBI:16991"/>
    </ligand>
</feature>
<keyword id="KW-0067">ATP-binding</keyword>
<keyword id="KW-0963">Cytoplasm</keyword>
<keyword id="KW-0227">DNA damage</keyword>
<keyword id="KW-0233">DNA recombination</keyword>
<keyword id="KW-0234">DNA repair</keyword>
<keyword id="KW-0238">DNA-binding</keyword>
<keyword id="KW-0378">Hydrolase</keyword>
<keyword id="KW-0547">Nucleotide-binding</keyword>
<keyword id="KW-1185">Reference proteome</keyword>
<protein>
    <recommendedName>
        <fullName evidence="1">Holliday junction branch migration complex subunit RuvB</fullName>
        <ecNumber evidence="1">3.6.4.-</ecNumber>
    </recommendedName>
</protein>
<name>RUVB_THEYD</name>
<organism>
    <name type="scientific">Thermodesulfovibrio yellowstonii (strain ATCC 51303 / DSM 11347 / YP87)</name>
    <dbReference type="NCBI Taxonomy" id="289376"/>
    <lineage>
        <taxon>Bacteria</taxon>
        <taxon>Pseudomonadati</taxon>
        <taxon>Nitrospirota</taxon>
        <taxon>Thermodesulfovibrionia</taxon>
        <taxon>Thermodesulfovibrionales</taxon>
        <taxon>Thermodesulfovibrionaceae</taxon>
        <taxon>Thermodesulfovibrio</taxon>
    </lineage>
</organism>
<comment type="function">
    <text evidence="1">The RuvA-RuvB-RuvC complex processes Holliday junction (HJ) DNA during genetic recombination and DNA repair, while the RuvA-RuvB complex plays an important role in the rescue of blocked DNA replication forks via replication fork reversal (RFR). RuvA specifically binds to HJ cruciform DNA, conferring on it an open structure. The RuvB hexamer acts as an ATP-dependent pump, pulling dsDNA into and through the RuvAB complex. RuvB forms 2 homohexamers on either side of HJ DNA bound by 1 or 2 RuvA tetramers; 4 subunits per hexamer contact DNA at a time. Coordinated motions by a converter formed by DNA-disengaged RuvB subunits stimulates ATP hydrolysis and nucleotide exchange. Immobilization of the converter enables RuvB to convert the ATP-contained energy into a lever motion, pulling 2 nucleotides of DNA out of the RuvA tetramer per ATP hydrolyzed, thus driving DNA branch migration. The RuvB motors rotate together with the DNA substrate, which together with the progressing nucleotide cycle form the mechanistic basis for DNA recombination by continuous HJ branch migration. Branch migration allows RuvC to scan DNA until it finds its consensus sequence, where it cleaves and resolves cruciform DNA.</text>
</comment>
<comment type="catalytic activity">
    <reaction evidence="1">
        <text>ATP + H2O = ADP + phosphate + H(+)</text>
        <dbReference type="Rhea" id="RHEA:13065"/>
        <dbReference type="ChEBI" id="CHEBI:15377"/>
        <dbReference type="ChEBI" id="CHEBI:15378"/>
        <dbReference type="ChEBI" id="CHEBI:30616"/>
        <dbReference type="ChEBI" id="CHEBI:43474"/>
        <dbReference type="ChEBI" id="CHEBI:456216"/>
    </reaction>
</comment>
<comment type="subunit">
    <text evidence="1">Homohexamer. Forms an RuvA(8)-RuvB(12)-Holliday junction (HJ) complex. HJ DNA is sandwiched between 2 RuvA tetramers; dsDNA enters through RuvA and exits via RuvB. An RuvB hexamer assembles on each DNA strand where it exits the tetramer. Each RuvB hexamer is contacted by two RuvA subunits (via domain III) on 2 adjacent RuvB subunits; this complex drives branch migration. In the full resolvosome a probable DNA-RuvA(4)-RuvB(12)-RuvC(2) complex forms which resolves the HJ.</text>
</comment>
<comment type="subcellular location">
    <subcellularLocation>
        <location evidence="1">Cytoplasm</location>
    </subcellularLocation>
</comment>
<comment type="domain">
    <text evidence="1">Has 3 domains, the large (RuvB-L) and small ATPase (RuvB-S) domains and the C-terminal head (RuvB-H) domain. The head domain binds DNA, while the ATPase domains jointly bind ATP, ADP or are empty depending on the state of the subunit in the translocation cycle. During a single DNA translocation step the structure of each domain remains the same, but their relative positions change.</text>
</comment>
<comment type="similarity">
    <text evidence="1">Belongs to the RuvB family.</text>
</comment>